<feature type="chain" id="PRO_1000011163" description="Phosphopantetheine adenylyltransferase">
    <location>
        <begin position="1"/>
        <end position="161"/>
    </location>
</feature>
<feature type="binding site" evidence="1">
    <location>
        <begin position="9"/>
        <end position="10"/>
    </location>
    <ligand>
        <name>ATP</name>
        <dbReference type="ChEBI" id="CHEBI:30616"/>
    </ligand>
</feature>
<feature type="binding site" evidence="1">
    <location>
        <position position="9"/>
    </location>
    <ligand>
        <name>substrate</name>
    </ligand>
</feature>
<feature type="binding site" evidence="1">
    <location>
        <position position="17"/>
    </location>
    <ligand>
        <name>ATP</name>
        <dbReference type="ChEBI" id="CHEBI:30616"/>
    </ligand>
</feature>
<feature type="binding site" evidence="1">
    <location>
        <position position="41"/>
    </location>
    <ligand>
        <name>substrate</name>
    </ligand>
</feature>
<feature type="binding site" evidence="1">
    <location>
        <position position="73"/>
    </location>
    <ligand>
        <name>substrate</name>
    </ligand>
</feature>
<feature type="binding site" evidence="1">
    <location>
        <position position="87"/>
    </location>
    <ligand>
        <name>substrate</name>
    </ligand>
</feature>
<feature type="binding site" evidence="1">
    <location>
        <begin position="88"/>
        <end position="90"/>
    </location>
    <ligand>
        <name>ATP</name>
        <dbReference type="ChEBI" id="CHEBI:30616"/>
    </ligand>
</feature>
<feature type="binding site" evidence="1">
    <location>
        <position position="98"/>
    </location>
    <ligand>
        <name>ATP</name>
        <dbReference type="ChEBI" id="CHEBI:30616"/>
    </ligand>
</feature>
<feature type="binding site" evidence="1">
    <location>
        <begin position="123"/>
        <end position="129"/>
    </location>
    <ligand>
        <name>ATP</name>
        <dbReference type="ChEBI" id="CHEBI:30616"/>
    </ligand>
</feature>
<feature type="site" description="Transition state stabilizer" evidence="1">
    <location>
        <position position="17"/>
    </location>
</feature>
<sequence length="161" mass="17559">MTIAVFPGSFDPLTNGHVDLITRASRMFDQLIVTVGKNTSKQGLFTTSERVAFIEAAIAALPNVTVQVEQGLTVDFMKSVQATVLVRGIRNSTDFEYEQGIANLNRHLAPQVDTACLMADPQYQYVSSSLLKEVARFGGDLKQLVPSMVAKAMVARLEGDH</sequence>
<dbReference type="EC" id="2.7.7.3" evidence="1"/>
<dbReference type="EMBL" id="CP000416">
    <property type="protein sequence ID" value="ABJ64497.1"/>
    <property type="molecule type" value="Genomic_DNA"/>
</dbReference>
<dbReference type="RefSeq" id="WP_011668070.1">
    <property type="nucleotide sequence ID" value="NC_008497.1"/>
</dbReference>
<dbReference type="SMR" id="Q03QM5"/>
<dbReference type="STRING" id="387344.LVIS_1399"/>
<dbReference type="KEGG" id="lbr:LVIS_1399"/>
<dbReference type="eggNOG" id="COG0669">
    <property type="taxonomic scope" value="Bacteria"/>
</dbReference>
<dbReference type="HOGENOM" id="CLU_100149_0_1_9"/>
<dbReference type="UniPathway" id="UPA00241">
    <property type="reaction ID" value="UER00355"/>
</dbReference>
<dbReference type="Proteomes" id="UP000001652">
    <property type="component" value="Chromosome"/>
</dbReference>
<dbReference type="GO" id="GO:0005737">
    <property type="term" value="C:cytoplasm"/>
    <property type="evidence" value="ECO:0007669"/>
    <property type="project" value="UniProtKB-SubCell"/>
</dbReference>
<dbReference type="GO" id="GO:0005524">
    <property type="term" value="F:ATP binding"/>
    <property type="evidence" value="ECO:0007669"/>
    <property type="project" value="UniProtKB-KW"/>
</dbReference>
<dbReference type="GO" id="GO:0004595">
    <property type="term" value="F:pantetheine-phosphate adenylyltransferase activity"/>
    <property type="evidence" value="ECO:0007669"/>
    <property type="project" value="UniProtKB-UniRule"/>
</dbReference>
<dbReference type="GO" id="GO:0015937">
    <property type="term" value="P:coenzyme A biosynthetic process"/>
    <property type="evidence" value="ECO:0007669"/>
    <property type="project" value="UniProtKB-UniRule"/>
</dbReference>
<dbReference type="CDD" id="cd02163">
    <property type="entry name" value="PPAT"/>
    <property type="match status" value="1"/>
</dbReference>
<dbReference type="Gene3D" id="3.40.50.620">
    <property type="entry name" value="HUPs"/>
    <property type="match status" value="1"/>
</dbReference>
<dbReference type="HAMAP" id="MF_00151">
    <property type="entry name" value="PPAT_bact"/>
    <property type="match status" value="1"/>
</dbReference>
<dbReference type="InterPro" id="IPR004821">
    <property type="entry name" value="Cyt_trans-like"/>
</dbReference>
<dbReference type="InterPro" id="IPR001980">
    <property type="entry name" value="PPAT"/>
</dbReference>
<dbReference type="InterPro" id="IPR014729">
    <property type="entry name" value="Rossmann-like_a/b/a_fold"/>
</dbReference>
<dbReference type="NCBIfam" id="TIGR01510">
    <property type="entry name" value="coaD_prev_kdtB"/>
    <property type="match status" value="1"/>
</dbReference>
<dbReference type="NCBIfam" id="TIGR00125">
    <property type="entry name" value="cyt_tran_rel"/>
    <property type="match status" value="1"/>
</dbReference>
<dbReference type="PANTHER" id="PTHR21342">
    <property type="entry name" value="PHOSPHOPANTETHEINE ADENYLYLTRANSFERASE"/>
    <property type="match status" value="1"/>
</dbReference>
<dbReference type="PANTHER" id="PTHR21342:SF1">
    <property type="entry name" value="PHOSPHOPANTETHEINE ADENYLYLTRANSFERASE"/>
    <property type="match status" value="1"/>
</dbReference>
<dbReference type="Pfam" id="PF01467">
    <property type="entry name" value="CTP_transf_like"/>
    <property type="match status" value="1"/>
</dbReference>
<dbReference type="PRINTS" id="PR01020">
    <property type="entry name" value="LPSBIOSNTHSS"/>
</dbReference>
<dbReference type="SUPFAM" id="SSF52374">
    <property type="entry name" value="Nucleotidylyl transferase"/>
    <property type="match status" value="1"/>
</dbReference>
<comment type="function">
    <text evidence="1">Reversibly transfers an adenylyl group from ATP to 4'-phosphopantetheine, yielding dephospho-CoA (dPCoA) and pyrophosphate.</text>
</comment>
<comment type="catalytic activity">
    <reaction evidence="1">
        <text>(R)-4'-phosphopantetheine + ATP + H(+) = 3'-dephospho-CoA + diphosphate</text>
        <dbReference type="Rhea" id="RHEA:19801"/>
        <dbReference type="ChEBI" id="CHEBI:15378"/>
        <dbReference type="ChEBI" id="CHEBI:30616"/>
        <dbReference type="ChEBI" id="CHEBI:33019"/>
        <dbReference type="ChEBI" id="CHEBI:57328"/>
        <dbReference type="ChEBI" id="CHEBI:61723"/>
        <dbReference type="EC" id="2.7.7.3"/>
    </reaction>
</comment>
<comment type="cofactor">
    <cofactor evidence="1">
        <name>Mg(2+)</name>
        <dbReference type="ChEBI" id="CHEBI:18420"/>
    </cofactor>
</comment>
<comment type="pathway">
    <text evidence="1">Cofactor biosynthesis; coenzyme A biosynthesis; CoA from (R)-pantothenate: step 4/5.</text>
</comment>
<comment type="subunit">
    <text evidence="1">Homohexamer.</text>
</comment>
<comment type="subcellular location">
    <subcellularLocation>
        <location evidence="1">Cytoplasm</location>
    </subcellularLocation>
</comment>
<comment type="similarity">
    <text evidence="1">Belongs to the bacterial CoaD family.</text>
</comment>
<accession>Q03QM5</accession>
<evidence type="ECO:0000255" key="1">
    <source>
        <dbReference type="HAMAP-Rule" id="MF_00151"/>
    </source>
</evidence>
<name>COAD_LEVBA</name>
<protein>
    <recommendedName>
        <fullName evidence="1">Phosphopantetheine adenylyltransferase</fullName>
        <ecNumber evidence="1">2.7.7.3</ecNumber>
    </recommendedName>
    <alternativeName>
        <fullName evidence="1">Dephospho-CoA pyrophosphorylase</fullName>
    </alternativeName>
    <alternativeName>
        <fullName evidence="1">Pantetheine-phosphate adenylyltransferase</fullName>
        <shortName evidence="1">PPAT</shortName>
    </alternativeName>
</protein>
<gene>
    <name evidence="1" type="primary">coaD</name>
    <name type="ordered locus">LVIS_1399</name>
</gene>
<proteinExistence type="inferred from homology"/>
<keyword id="KW-0067">ATP-binding</keyword>
<keyword id="KW-0173">Coenzyme A biosynthesis</keyword>
<keyword id="KW-0963">Cytoplasm</keyword>
<keyword id="KW-0460">Magnesium</keyword>
<keyword id="KW-0547">Nucleotide-binding</keyword>
<keyword id="KW-0548">Nucleotidyltransferase</keyword>
<keyword id="KW-1185">Reference proteome</keyword>
<keyword id="KW-0808">Transferase</keyword>
<organism>
    <name type="scientific">Levilactobacillus brevis (strain ATCC 367 / BCRC 12310 / CIP 105137 / JCM 1170 / LMG 11437 / NCIMB 947 / NCTC 947)</name>
    <name type="common">Lactobacillus brevis</name>
    <dbReference type="NCBI Taxonomy" id="387344"/>
    <lineage>
        <taxon>Bacteria</taxon>
        <taxon>Bacillati</taxon>
        <taxon>Bacillota</taxon>
        <taxon>Bacilli</taxon>
        <taxon>Lactobacillales</taxon>
        <taxon>Lactobacillaceae</taxon>
        <taxon>Levilactobacillus</taxon>
    </lineage>
</organism>
<reference key="1">
    <citation type="journal article" date="2006" name="Proc. Natl. Acad. Sci. U.S.A.">
        <title>Comparative genomics of the lactic acid bacteria.</title>
        <authorList>
            <person name="Makarova K.S."/>
            <person name="Slesarev A."/>
            <person name="Wolf Y.I."/>
            <person name="Sorokin A."/>
            <person name="Mirkin B."/>
            <person name="Koonin E.V."/>
            <person name="Pavlov A."/>
            <person name="Pavlova N."/>
            <person name="Karamychev V."/>
            <person name="Polouchine N."/>
            <person name="Shakhova V."/>
            <person name="Grigoriev I."/>
            <person name="Lou Y."/>
            <person name="Rohksar D."/>
            <person name="Lucas S."/>
            <person name="Huang K."/>
            <person name="Goodstein D.M."/>
            <person name="Hawkins T."/>
            <person name="Plengvidhya V."/>
            <person name="Welker D."/>
            <person name="Hughes J."/>
            <person name="Goh Y."/>
            <person name="Benson A."/>
            <person name="Baldwin K."/>
            <person name="Lee J.-H."/>
            <person name="Diaz-Muniz I."/>
            <person name="Dosti B."/>
            <person name="Smeianov V."/>
            <person name="Wechter W."/>
            <person name="Barabote R."/>
            <person name="Lorca G."/>
            <person name="Altermann E."/>
            <person name="Barrangou R."/>
            <person name="Ganesan B."/>
            <person name="Xie Y."/>
            <person name="Rawsthorne H."/>
            <person name="Tamir D."/>
            <person name="Parker C."/>
            <person name="Breidt F."/>
            <person name="Broadbent J.R."/>
            <person name="Hutkins R."/>
            <person name="O'Sullivan D."/>
            <person name="Steele J."/>
            <person name="Unlu G."/>
            <person name="Saier M.H. Jr."/>
            <person name="Klaenhammer T."/>
            <person name="Richardson P."/>
            <person name="Kozyavkin S."/>
            <person name="Weimer B.C."/>
            <person name="Mills D.A."/>
        </authorList>
    </citation>
    <scope>NUCLEOTIDE SEQUENCE [LARGE SCALE GENOMIC DNA]</scope>
    <source>
        <strain>ATCC 367 / BCRC 12310 / CIP 105137 / JCM 1170 / LMG 11437 / NCIMB 947 / NCTC 947</strain>
    </source>
</reference>